<name>DNAJ_METRJ</name>
<evidence type="ECO:0000255" key="1">
    <source>
        <dbReference type="HAMAP-Rule" id="MF_01152"/>
    </source>
</evidence>
<sequence>MSKRDYYEILGVTKTATEGEMKVAFRKLAMTYHPDRNPGDKDAEIKFKEINEAYQCLSDGQKRAAYDRFGHAAFSQGGGGPGFGNEFGDFMSDIFDNFFGDGRGGGGARGRGGTPGRERGADLRYNLEITLEEAFTGKAETIKIPTSITCEVCDGSGAKPGSKPRTCPTCAGYGRVRAAQGFFAIERTCPNCHGRGEIVDDPCTACQGAGRVNRERTLSINVPAGVDDGLRIRLAGEGESGLRGGPAGDLYVFLSIKQHEFFQRDGADLFCRVPISMVTAALSGEITVPVIDGSQTQVRIPAGTQTAKQFRIKGKGMPVLRSREVGDLYIQVFVETPQNLTKRQRELLQEFDLSASPENHPESAGFFSKVRDFFGGAVRP</sequence>
<organism>
    <name type="scientific">Methylobacterium radiotolerans (strain ATCC 27329 / DSM 1819 / JCM 2831 / NBRC 15690 / NCIMB 10815 / 0-1)</name>
    <dbReference type="NCBI Taxonomy" id="426355"/>
    <lineage>
        <taxon>Bacteria</taxon>
        <taxon>Pseudomonadati</taxon>
        <taxon>Pseudomonadota</taxon>
        <taxon>Alphaproteobacteria</taxon>
        <taxon>Hyphomicrobiales</taxon>
        <taxon>Methylobacteriaceae</taxon>
        <taxon>Methylobacterium</taxon>
    </lineage>
</organism>
<reference key="1">
    <citation type="submission" date="2008-03" db="EMBL/GenBank/DDBJ databases">
        <title>Complete sequence of chromosome of Methylobacterium radiotolerans JCM 2831.</title>
        <authorList>
            <consortium name="US DOE Joint Genome Institute"/>
            <person name="Copeland A."/>
            <person name="Lucas S."/>
            <person name="Lapidus A."/>
            <person name="Glavina del Rio T."/>
            <person name="Dalin E."/>
            <person name="Tice H."/>
            <person name="Bruce D."/>
            <person name="Goodwin L."/>
            <person name="Pitluck S."/>
            <person name="Kiss H."/>
            <person name="Brettin T."/>
            <person name="Detter J.C."/>
            <person name="Han C."/>
            <person name="Kuske C.R."/>
            <person name="Schmutz J."/>
            <person name="Larimer F."/>
            <person name="Land M."/>
            <person name="Hauser L."/>
            <person name="Kyrpides N."/>
            <person name="Mikhailova N."/>
            <person name="Marx C.J."/>
            <person name="Richardson P."/>
        </authorList>
    </citation>
    <scope>NUCLEOTIDE SEQUENCE [LARGE SCALE GENOMIC DNA]</scope>
    <source>
        <strain>ATCC 27329 / DSM 1819 / JCM 2831 / NBRC 15690 / NCIMB 10815 / 0-1</strain>
    </source>
</reference>
<protein>
    <recommendedName>
        <fullName evidence="1">Chaperone protein DnaJ</fullName>
    </recommendedName>
</protein>
<feature type="chain" id="PRO_1000164272" description="Chaperone protein DnaJ">
    <location>
        <begin position="1"/>
        <end position="380"/>
    </location>
</feature>
<feature type="domain" description="J" evidence="1">
    <location>
        <begin position="5"/>
        <end position="70"/>
    </location>
</feature>
<feature type="repeat" description="CXXCXGXG motif">
    <location>
        <begin position="150"/>
        <end position="157"/>
    </location>
</feature>
<feature type="repeat" description="CXXCXGXG motif">
    <location>
        <begin position="167"/>
        <end position="174"/>
    </location>
</feature>
<feature type="repeat" description="CXXCXGXG motif">
    <location>
        <begin position="189"/>
        <end position="196"/>
    </location>
</feature>
<feature type="repeat" description="CXXCXGXG motif">
    <location>
        <begin position="203"/>
        <end position="210"/>
    </location>
</feature>
<feature type="zinc finger region" description="CR-type" evidence="1">
    <location>
        <begin position="137"/>
        <end position="215"/>
    </location>
</feature>
<feature type="binding site" evidence="1">
    <location>
        <position position="150"/>
    </location>
    <ligand>
        <name>Zn(2+)</name>
        <dbReference type="ChEBI" id="CHEBI:29105"/>
        <label>1</label>
    </ligand>
</feature>
<feature type="binding site" evidence="1">
    <location>
        <position position="153"/>
    </location>
    <ligand>
        <name>Zn(2+)</name>
        <dbReference type="ChEBI" id="CHEBI:29105"/>
        <label>1</label>
    </ligand>
</feature>
<feature type="binding site" evidence="1">
    <location>
        <position position="167"/>
    </location>
    <ligand>
        <name>Zn(2+)</name>
        <dbReference type="ChEBI" id="CHEBI:29105"/>
        <label>2</label>
    </ligand>
</feature>
<feature type="binding site" evidence="1">
    <location>
        <position position="170"/>
    </location>
    <ligand>
        <name>Zn(2+)</name>
        <dbReference type="ChEBI" id="CHEBI:29105"/>
        <label>2</label>
    </ligand>
</feature>
<feature type="binding site" evidence="1">
    <location>
        <position position="189"/>
    </location>
    <ligand>
        <name>Zn(2+)</name>
        <dbReference type="ChEBI" id="CHEBI:29105"/>
        <label>2</label>
    </ligand>
</feature>
<feature type="binding site" evidence="1">
    <location>
        <position position="192"/>
    </location>
    <ligand>
        <name>Zn(2+)</name>
        <dbReference type="ChEBI" id="CHEBI:29105"/>
        <label>2</label>
    </ligand>
</feature>
<feature type="binding site" evidence="1">
    <location>
        <position position="203"/>
    </location>
    <ligand>
        <name>Zn(2+)</name>
        <dbReference type="ChEBI" id="CHEBI:29105"/>
        <label>1</label>
    </ligand>
</feature>
<feature type="binding site" evidence="1">
    <location>
        <position position="206"/>
    </location>
    <ligand>
        <name>Zn(2+)</name>
        <dbReference type="ChEBI" id="CHEBI:29105"/>
        <label>1</label>
    </ligand>
</feature>
<gene>
    <name evidence="1" type="primary">dnaJ</name>
    <name type="ordered locus">Mrad2831_3920</name>
</gene>
<proteinExistence type="inferred from homology"/>
<keyword id="KW-0143">Chaperone</keyword>
<keyword id="KW-0963">Cytoplasm</keyword>
<keyword id="KW-0235">DNA replication</keyword>
<keyword id="KW-0479">Metal-binding</keyword>
<keyword id="KW-0677">Repeat</keyword>
<keyword id="KW-0346">Stress response</keyword>
<keyword id="KW-0862">Zinc</keyword>
<keyword id="KW-0863">Zinc-finger</keyword>
<dbReference type="EMBL" id="CP001001">
    <property type="protein sequence ID" value="ACB25894.1"/>
    <property type="molecule type" value="Genomic_DNA"/>
</dbReference>
<dbReference type="RefSeq" id="WP_012320851.1">
    <property type="nucleotide sequence ID" value="NC_010505.1"/>
</dbReference>
<dbReference type="SMR" id="B1LZ52"/>
<dbReference type="STRING" id="426355.Mrad2831_3920"/>
<dbReference type="GeneID" id="6139975"/>
<dbReference type="KEGG" id="mrd:Mrad2831_3920"/>
<dbReference type="PATRIC" id="fig|426355.14.peg.4013"/>
<dbReference type="eggNOG" id="COG0484">
    <property type="taxonomic scope" value="Bacteria"/>
</dbReference>
<dbReference type="HOGENOM" id="CLU_017633_0_7_5"/>
<dbReference type="OrthoDB" id="9779889at2"/>
<dbReference type="Proteomes" id="UP000006589">
    <property type="component" value="Chromosome"/>
</dbReference>
<dbReference type="GO" id="GO:0005737">
    <property type="term" value="C:cytoplasm"/>
    <property type="evidence" value="ECO:0007669"/>
    <property type="project" value="UniProtKB-SubCell"/>
</dbReference>
<dbReference type="GO" id="GO:0005524">
    <property type="term" value="F:ATP binding"/>
    <property type="evidence" value="ECO:0007669"/>
    <property type="project" value="InterPro"/>
</dbReference>
<dbReference type="GO" id="GO:0031072">
    <property type="term" value="F:heat shock protein binding"/>
    <property type="evidence" value="ECO:0007669"/>
    <property type="project" value="InterPro"/>
</dbReference>
<dbReference type="GO" id="GO:0051082">
    <property type="term" value="F:unfolded protein binding"/>
    <property type="evidence" value="ECO:0007669"/>
    <property type="project" value="UniProtKB-UniRule"/>
</dbReference>
<dbReference type="GO" id="GO:0008270">
    <property type="term" value="F:zinc ion binding"/>
    <property type="evidence" value="ECO:0007669"/>
    <property type="project" value="UniProtKB-UniRule"/>
</dbReference>
<dbReference type="GO" id="GO:0051085">
    <property type="term" value="P:chaperone cofactor-dependent protein refolding"/>
    <property type="evidence" value="ECO:0007669"/>
    <property type="project" value="TreeGrafter"/>
</dbReference>
<dbReference type="GO" id="GO:0006260">
    <property type="term" value="P:DNA replication"/>
    <property type="evidence" value="ECO:0007669"/>
    <property type="project" value="UniProtKB-KW"/>
</dbReference>
<dbReference type="GO" id="GO:0042026">
    <property type="term" value="P:protein refolding"/>
    <property type="evidence" value="ECO:0007669"/>
    <property type="project" value="TreeGrafter"/>
</dbReference>
<dbReference type="GO" id="GO:0009408">
    <property type="term" value="P:response to heat"/>
    <property type="evidence" value="ECO:0007669"/>
    <property type="project" value="InterPro"/>
</dbReference>
<dbReference type="CDD" id="cd06257">
    <property type="entry name" value="DnaJ"/>
    <property type="match status" value="1"/>
</dbReference>
<dbReference type="CDD" id="cd10747">
    <property type="entry name" value="DnaJ_C"/>
    <property type="match status" value="1"/>
</dbReference>
<dbReference type="CDD" id="cd10719">
    <property type="entry name" value="DnaJ_zf"/>
    <property type="match status" value="1"/>
</dbReference>
<dbReference type="FunFam" id="1.10.287.110:FF:000034">
    <property type="entry name" value="Chaperone protein DnaJ"/>
    <property type="match status" value="1"/>
</dbReference>
<dbReference type="FunFam" id="2.10.230.10:FF:000002">
    <property type="entry name" value="Molecular chaperone DnaJ"/>
    <property type="match status" value="1"/>
</dbReference>
<dbReference type="FunFam" id="2.60.260.20:FF:000004">
    <property type="entry name" value="Molecular chaperone DnaJ"/>
    <property type="match status" value="1"/>
</dbReference>
<dbReference type="Gene3D" id="1.10.287.110">
    <property type="entry name" value="DnaJ domain"/>
    <property type="match status" value="1"/>
</dbReference>
<dbReference type="Gene3D" id="2.10.230.10">
    <property type="entry name" value="Heat shock protein DnaJ, cysteine-rich domain"/>
    <property type="match status" value="1"/>
</dbReference>
<dbReference type="Gene3D" id="2.60.260.20">
    <property type="entry name" value="Urease metallochaperone UreE, N-terminal domain"/>
    <property type="match status" value="2"/>
</dbReference>
<dbReference type="HAMAP" id="MF_01152">
    <property type="entry name" value="DnaJ"/>
    <property type="match status" value="1"/>
</dbReference>
<dbReference type="InterPro" id="IPR012724">
    <property type="entry name" value="DnaJ"/>
</dbReference>
<dbReference type="InterPro" id="IPR002939">
    <property type="entry name" value="DnaJ_C"/>
</dbReference>
<dbReference type="InterPro" id="IPR001623">
    <property type="entry name" value="DnaJ_domain"/>
</dbReference>
<dbReference type="InterPro" id="IPR018253">
    <property type="entry name" value="DnaJ_domain_CS"/>
</dbReference>
<dbReference type="InterPro" id="IPR008971">
    <property type="entry name" value="HSP40/DnaJ_pept-bd"/>
</dbReference>
<dbReference type="InterPro" id="IPR001305">
    <property type="entry name" value="HSP_DnaJ_Cys-rich_dom"/>
</dbReference>
<dbReference type="InterPro" id="IPR036410">
    <property type="entry name" value="HSP_DnaJ_Cys-rich_dom_sf"/>
</dbReference>
<dbReference type="InterPro" id="IPR036869">
    <property type="entry name" value="J_dom_sf"/>
</dbReference>
<dbReference type="NCBIfam" id="TIGR02349">
    <property type="entry name" value="DnaJ_bact"/>
    <property type="match status" value="1"/>
</dbReference>
<dbReference type="NCBIfam" id="NF008035">
    <property type="entry name" value="PRK10767.1"/>
    <property type="match status" value="1"/>
</dbReference>
<dbReference type="PANTHER" id="PTHR43096:SF48">
    <property type="entry name" value="CHAPERONE PROTEIN DNAJ"/>
    <property type="match status" value="1"/>
</dbReference>
<dbReference type="PANTHER" id="PTHR43096">
    <property type="entry name" value="DNAJ HOMOLOG 1, MITOCHONDRIAL-RELATED"/>
    <property type="match status" value="1"/>
</dbReference>
<dbReference type="Pfam" id="PF00226">
    <property type="entry name" value="DnaJ"/>
    <property type="match status" value="1"/>
</dbReference>
<dbReference type="Pfam" id="PF01556">
    <property type="entry name" value="DnaJ_C"/>
    <property type="match status" value="1"/>
</dbReference>
<dbReference type="Pfam" id="PF00684">
    <property type="entry name" value="DnaJ_CXXCXGXG"/>
    <property type="match status" value="1"/>
</dbReference>
<dbReference type="PRINTS" id="PR00625">
    <property type="entry name" value="JDOMAIN"/>
</dbReference>
<dbReference type="SMART" id="SM00271">
    <property type="entry name" value="DnaJ"/>
    <property type="match status" value="1"/>
</dbReference>
<dbReference type="SUPFAM" id="SSF46565">
    <property type="entry name" value="Chaperone J-domain"/>
    <property type="match status" value="1"/>
</dbReference>
<dbReference type="SUPFAM" id="SSF57938">
    <property type="entry name" value="DnaJ/Hsp40 cysteine-rich domain"/>
    <property type="match status" value="1"/>
</dbReference>
<dbReference type="SUPFAM" id="SSF49493">
    <property type="entry name" value="HSP40/DnaJ peptide-binding domain"/>
    <property type="match status" value="2"/>
</dbReference>
<dbReference type="PROSITE" id="PS00636">
    <property type="entry name" value="DNAJ_1"/>
    <property type="match status" value="1"/>
</dbReference>
<dbReference type="PROSITE" id="PS50076">
    <property type="entry name" value="DNAJ_2"/>
    <property type="match status" value="1"/>
</dbReference>
<dbReference type="PROSITE" id="PS51188">
    <property type="entry name" value="ZF_CR"/>
    <property type="match status" value="1"/>
</dbReference>
<comment type="function">
    <text evidence="1">Participates actively in the response to hyperosmotic and heat shock by preventing the aggregation of stress-denatured proteins and by disaggregating proteins, also in an autonomous, DnaK-independent fashion. Unfolded proteins bind initially to DnaJ; upon interaction with the DnaJ-bound protein, DnaK hydrolyzes its bound ATP, resulting in the formation of a stable complex. GrpE releases ADP from DnaK; ATP binding to DnaK triggers the release of the substrate protein, thus completing the reaction cycle. Several rounds of ATP-dependent interactions between DnaJ, DnaK and GrpE are required for fully efficient folding. Also involved, together with DnaK and GrpE, in the DNA replication of plasmids through activation of initiation proteins.</text>
</comment>
<comment type="cofactor">
    <cofactor evidence="1">
        <name>Zn(2+)</name>
        <dbReference type="ChEBI" id="CHEBI:29105"/>
    </cofactor>
    <text evidence="1">Binds 2 Zn(2+) ions per monomer.</text>
</comment>
<comment type="subunit">
    <text evidence="1">Homodimer.</text>
</comment>
<comment type="subcellular location">
    <subcellularLocation>
        <location evidence="1">Cytoplasm</location>
    </subcellularLocation>
</comment>
<comment type="domain">
    <text evidence="1">The J domain is necessary and sufficient to stimulate DnaK ATPase activity. Zinc center 1 plays an important role in the autonomous, DnaK-independent chaperone activity of DnaJ. Zinc center 2 is essential for interaction with DnaK and for DnaJ activity.</text>
</comment>
<comment type="similarity">
    <text evidence="1">Belongs to the DnaJ family.</text>
</comment>
<accession>B1LZ52</accession>